<name>HN_PI2H</name>
<evidence type="ECO:0000250" key="1"/>
<evidence type="ECO:0000250" key="2">
    <source>
        <dbReference type="UniProtKB" id="P04853"/>
    </source>
</evidence>
<evidence type="ECO:0000250" key="3">
    <source>
        <dbReference type="UniProtKB" id="Q91UL0"/>
    </source>
</evidence>
<evidence type="ECO:0000250" key="4">
    <source>
        <dbReference type="UniProtKB" id="Q9WAF5"/>
    </source>
</evidence>
<evidence type="ECO:0000255" key="5"/>
<evidence type="ECO:0000269" key="6">
    <source>
    </source>
</evidence>
<evidence type="ECO:0000305" key="7"/>
<comment type="function">
    <text evidence="1">Attaches the virus to sialic acid-containing cell receptors and thereby initiating infection. Binding of HN protein to the receptor induces a conformational change that allows the F protein to trigger virion/cell membranes fusion (By similarity).</text>
</comment>
<comment type="function">
    <text evidence="1">Neuraminidase activity ensures the efficient spread of the virus by dissociating the mature virions from the neuraminic acid containing glycoproteins.</text>
</comment>
<comment type="catalytic activity">
    <reaction evidence="6">
        <text>Hydrolysis of alpha-(2-&gt;3)-, alpha-(2-&gt;6)-, alpha-(2-&gt;8)- glycosidic linkages of terminal sialic acid residues in oligosaccharides, glycoproteins, glycolipids, colominic acid and synthetic substrates.</text>
        <dbReference type="EC" id="3.2.1.18"/>
    </reaction>
</comment>
<comment type="subunit">
    <text evidence="2 4">Homotetramer; composed of disulfide-linked homodimers (By similarity). Interacts with F protein trimer (By similarity).</text>
</comment>
<comment type="subcellular location">
    <subcellularLocation>
        <location evidence="7">Virion membrane</location>
        <topology evidence="7">Single-pass type II membrane protein</topology>
    </subcellularLocation>
    <subcellularLocation>
        <location evidence="7">Host cell membrane</location>
        <topology evidence="7">Single-pass type II membrane protein</topology>
    </subcellularLocation>
</comment>
<comment type="domain">
    <text evidence="4">The C-terminus (head domain) is involved in binding the cellular receptor.</text>
</comment>
<comment type="similarity">
    <text evidence="7">Belongs to the paramyxoviruses hemagglutinin-neuraminidase family.</text>
</comment>
<accession>P25465</accession>
<organismHost>
    <name type="scientific">Homo sapiens</name>
    <name type="common">Human</name>
    <dbReference type="NCBI Taxonomy" id="9606"/>
</organismHost>
<organism>
    <name type="scientific">Human parainfluenza 2 virus</name>
    <name type="common">HPIV-2</name>
    <dbReference type="NCBI Taxonomy" id="2560525"/>
    <lineage>
        <taxon>Viruses</taxon>
        <taxon>Riboviria</taxon>
        <taxon>Orthornavirae</taxon>
        <taxon>Negarnaviricota</taxon>
        <taxon>Haploviricotina</taxon>
        <taxon>Monjiviricetes</taxon>
        <taxon>Mononegavirales</taxon>
        <taxon>Paramyxoviridae</taxon>
        <taxon>Rubulavirinae</taxon>
        <taxon>Orthorubulavirus</taxon>
        <taxon>Orthorubulavirus laryngotracheitidis</taxon>
    </lineage>
</organism>
<keyword id="KW-1015">Disulfide bond</keyword>
<keyword id="KW-0325">Glycoprotein</keyword>
<keyword id="KW-0348">Hemagglutinin</keyword>
<keyword id="KW-1032">Host cell membrane</keyword>
<keyword id="KW-1043">Host membrane</keyword>
<keyword id="KW-0945">Host-virus interaction</keyword>
<keyword id="KW-0378">Hydrolase</keyword>
<keyword id="KW-0472">Membrane</keyword>
<keyword id="KW-0735">Signal-anchor</keyword>
<keyword id="KW-0812">Transmembrane</keyword>
<keyword id="KW-1133">Transmembrane helix</keyword>
<keyword id="KW-1161">Viral attachment to host cell</keyword>
<keyword id="KW-0261">Viral envelope protein</keyword>
<keyword id="KW-0946">Virion</keyword>
<keyword id="KW-1160">Virus entry into host cell</keyword>
<reference key="1">
    <citation type="journal article" date="1990" name="J. Gen. Virol.">
        <title>Sequence analysis of the HN gene of parainfluenza virus type 2.</title>
        <authorList>
            <person name="Precious B."/>
            <person name="Southern J.A."/>
            <person name="Randall R.E."/>
        </authorList>
    </citation>
    <scope>NUCLEOTIDE SEQUENCE [MRNA]</scope>
</reference>
<reference key="2">
    <citation type="journal article" date="2024" name="Microbiol. Immunol.">
        <title>Analysis of neuraminidase activity of human parainfluenza viruses using enzyme-linked lectin assay and BTP3-Neu5Ac assay.</title>
        <authorList>
            <person name="Yang J."/>
            <person name="Kisu T."/>
            <person name="Watanabe O."/>
            <person name="Kitai Y."/>
            <person name="Ohmiya S."/>
            <person name="Fan Y."/>
            <person name="Nishimura H."/>
        </authorList>
    </citation>
    <scope>CATALYTIC ACTIVITY</scope>
    <source>
        <strain>Isolate human/Japan/456/2019</strain>
    </source>
</reference>
<feature type="chain" id="PRO_0000142622" description="Hemagglutinin-neuraminidase">
    <location>
        <begin position="1"/>
        <end position="571"/>
    </location>
</feature>
<feature type="topological domain" description="Intravirion" evidence="5">
    <location>
        <begin position="1"/>
        <end position="25"/>
    </location>
</feature>
<feature type="transmembrane region" description="Helical" evidence="5">
    <location>
        <begin position="26"/>
        <end position="46"/>
    </location>
</feature>
<feature type="topological domain" description="Virion surface" evidence="5">
    <location>
        <begin position="47"/>
        <end position="571"/>
    </location>
</feature>
<feature type="region of interest" description="Involved in neuraminidase activity" evidence="3">
    <location>
        <begin position="228"/>
        <end position="233"/>
    </location>
</feature>
<feature type="glycosylation site" description="N-linked (GlcNAc...) asparagine; by host" evidence="5">
    <location>
        <position position="272"/>
    </location>
</feature>
<feature type="glycosylation site" description="N-linked (GlcNAc...) asparagine; by host" evidence="5">
    <location>
        <position position="284"/>
    </location>
</feature>
<feature type="glycosylation site" description="N-linked (GlcNAc...) asparagine; by host" evidence="5">
    <location>
        <position position="335"/>
    </location>
</feature>
<feature type="glycosylation site" description="N-linked (GlcNAc...) asparagine; by host" evidence="5">
    <location>
        <position position="386"/>
    </location>
</feature>
<feature type="glycosylation site" description="N-linked (GlcNAc...) asparagine; by host" evidence="5">
    <location>
        <position position="454"/>
    </location>
</feature>
<feature type="glycosylation site" description="N-linked (GlcNAc...) asparagine; by host" evidence="5">
    <location>
        <position position="498"/>
    </location>
</feature>
<feature type="glycosylation site" description="N-linked (GlcNAc...) asparagine; by host" evidence="5">
    <location>
        <position position="501"/>
    </location>
</feature>
<feature type="glycosylation site" description="N-linked (GlcNAc...) asparagine; by host" evidence="5">
    <location>
        <position position="517"/>
    </location>
</feature>
<feature type="glycosylation site" description="N-linked (GlcNAc...) asparagine; by host" evidence="5">
    <location>
        <position position="522"/>
    </location>
</feature>
<feature type="disulfide bond" evidence="4">
    <location>
        <begin position="166"/>
        <end position="190"/>
    </location>
</feature>
<feature type="disulfide bond" evidence="4">
    <location>
        <begin position="180"/>
        <end position="241"/>
    </location>
</feature>
<feature type="disulfide bond" evidence="4">
    <location>
        <begin position="232"/>
        <end position="245"/>
    </location>
</feature>
<feature type="disulfide bond" evidence="4">
    <location>
        <begin position="338"/>
        <end position="459"/>
    </location>
</feature>
<feature type="disulfide bond" evidence="4">
    <location>
        <begin position="370"/>
        <end position="380"/>
    </location>
</feature>
<feature type="disulfide bond" evidence="4">
    <location>
        <begin position="453"/>
        <end position="463"/>
    </location>
</feature>
<feature type="disulfide bond" evidence="4">
    <location>
        <begin position="535"/>
        <end position="546"/>
    </location>
</feature>
<proteinExistence type="evidence at protein level"/>
<dbReference type="EC" id="3.2.1.18" evidence="6"/>
<dbReference type="EMBL" id="D00865">
    <property type="protein sequence ID" value="BAA00739.1"/>
    <property type="molecule type" value="mRNA"/>
</dbReference>
<dbReference type="PIR" id="A34767">
    <property type="entry name" value="HNNZT2"/>
</dbReference>
<dbReference type="SMR" id="P25465"/>
<dbReference type="GlyCosmos" id="P25465">
    <property type="glycosylation" value="9 sites, No reported glycans"/>
</dbReference>
<dbReference type="GO" id="GO:0020002">
    <property type="term" value="C:host cell plasma membrane"/>
    <property type="evidence" value="ECO:0007669"/>
    <property type="project" value="UniProtKB-SubCell"/>
</dbReference>
<dbReference type="GO" id="GO:0016020">
    <property type="term" value="C:membrane"/>
    <property type="evidence" value="ECO:0007669"/>
    <property type="project" value="UniProtKB-KW"/>
</dbReference>
<dbReference type="GO" id="GO:0019031">
    <property type="term" value="C:viral envelope"/>
    <property type="evidence" value="ECO:0007669"/>
    <property type="project" value="UniProtKB-KW"/>
</dbReference>
<dbReference type="GO" id="GO:0055036">
    <property type="term" value="C:virion membrane"/>
    <property type="evidence" value="ECO:0007669"/>
    <property type="project" value="UniProtKB-SubCell"/>
</dbReference>
<dbReference type="GO" id="GO:0004308">
    <property type="term" value="F:exo-alpha-sialidase activity"/>
    <property type="evidence" value="ECO:0007669"/>
    <property type="project" value="UniProtKB-EC"/>
</dbReference>
<dbReference type="GO" id="GO:0046789">
    <property type="term" value="F:host cell surface receptor binding"/>
    <property type="evidence" value="ECO:0007669"/>
    <property type="project" value="InterPro"/>
</dbReference>
<dbReference type="GO" id="GO:0046718">
    <property type="term" value="P:symbiont entry into host cell"/>
    <property type="evidence" value="ECO:0007669"/>
    <property type="project" value="UniProtKB-KW"/>
</dbReference>
<dbReference type="GO" id="GO:0019062">
    <property type="term" value="P:virion attachment to host cell"/>
    <property type="evidence" value="ECO:0007669"/>
    <property type="project" value="UniProtKB-KW"/>
</dbReference>
<dbReference type="CDD" id="cd15469">
    <property type="entry name" value="HN"/>
    <property type="match status" value="1"/>
</dbReference>
<dbReference type="Gene3D" id="1.20.5.110">
    <property type="match status" value="1"/>
</dbReference>
<dbReference type="Gene3D" id="2.120.10.10">
    <property type="match status" value="1"/>
</dbReference>
<dbReference type="InterPro" id="IPR016285">
    <property type="entry name" value="Hemagglutn-neuramid"/>
</dbReference>
<dbReference type="InterPro" id="IPR000665">
    <property type="entry name" value="Hemagglutn/HN"/>
</dbReference>
<dbReference type="InterPro" id="IPR036278">
    <property type="entry name" value="Sialidase_sf"/>
</dbReference>
<dbReference type="Pfam" id="PF00423">
    <property type="entry name" value="HN"/>
    <property type="match status" value="1"/>
</dbReference>
<dbReference type="PIRSF" id="PIRSF001072">
    <property type="entry name" value="Hemagglut-neuramid_paramyxoV"/>
    <property type="match status" value="1"/>
</dbReference>
<dbReference type="SUPFAM" id="SSF50939">
    <property type="entry name" value="Sialidases"/>
    <property type="match status" value="1"/>
</dbReference>
<protein>
    <recommendedName>
        <fullName>Hemagglutinin-neuraminidase</fullName>
        <ecNumber evidence="6">3.2.1.18</ecNumber>
    </recommendedName>
</protein>
<sequence>MEDYSNLSLKSIPKRTCRIIFRTATILGICTLIVLCSSILHEIIHLDVSSGLMDSDDSQQGIIQPIIESLKSLIALANQILYNVAIIIPLKIDSIETVIYSALKDMHTGSMSNTNCTPGNLLLHDAAYINGLNKFLVLKSYNGTPKYGPLLNIPSFIPSATSPNGCTRIPSFSLIKTHWCYTHNVILGDCLDFTTSNQYLAMGIIQQSAAAFPIFRTMKTIYLSDGINRKSCSVTAIPGGCVLYCYVATRSEKEDYATTDLAELRLAFYYYNDTFIERVISLPNTTGQWATINPAVGSGIYHLGFILFPVYGGLIKGTPSYNKQSSRYFIPKHPNITCAGKSSEQAAAARSSYVIRYHSNRLLQSAVLICPLSDMHTARCNLVMFNNSQVMMGAEGRLYVIDNNLYYYQRSSSWWSASLFYRINTDFSKGIPPIIEAQWVPSYQVPRPGVMPCNATSFCPANCITGVYADVWPLNDPEPTSQNALNPNYRFAGAFLRNESNRTNPTFYTASASALLNTTGFNNTNHKAAYTSSTCFKNTGTQKIYCLIIIEMGSSLLGEFQIIPFLRELIP</sequence>
<gene>
    <name type="primary">HN</name>
</gene>